<comment type="function">
    <text evidence="2 6 7">The PAF1 complex is a multifunctional complex. Involved in transcription initiation via genetic interactions with TATA-binding proteins. Involved in elongation. It regulates 3'-end formation of snR47 by modulating the recruitment or stable association of NRD1 and NAB3 with RNA polymerase II. Also has a role in transcription-coupled histone modification. Required for activation of the RAD6/UBC2-BRE1 ubiquitin ligase complex, which ubiquitinates histone H2B to form H2BK123ub1. Also required for the methylation of histone H3 by the COMPASS complex to form H3K4me, by SET2 to form H3K36me, and by DOT1 to form H3K79me. RNA polymerase II associated protein important for transcription of a subset of genes. Required for both positive and negative regulation. Negatively regulates MAK16 expression. Also required for efficient CLN2 transcription in late G1 and may be involved in transcription of galactose-inducible genes.</text>
</comment>
<comment type="subunit">
    <text evidence="2 3 4">Component of the PAF1 complex which consists of at least CDC73, CTR9, LEO1, PAF1 and RTF1. Interacts with FACT subunits POB3 and SPT16.</text>
</comment>
<comment type="interaction">
    <interactant intactId="EBI-12855">
        <id>P38351</id>
    </interactant>
    <interactant intactId="EBI-29913">
        <id>Q06697</id>
        <label>CDC73</label>
    </interactant>
    <organismsDiffer>false</organismsDiffer>
    <experiments>9</experiments>
</comment>
<comment type="interaction">
    <interactant intactId="EBI-12855">
        <id>P38351</id>
    </interactant>
    <interactant intactId="EBI-5283">
        <id>P89105</id>
        <label>CTR9</label>
    </interactant>
    <organismsDiffer>false</organismsDiffer>
    <experiments>6</experiments>
</comment>
<comment type="interaction">
    <interactant intactId="EBI-12855">
        <id>P38351</id>
    </interactant>
    <interactant intactId="EBI-10108">
        <id>P38439</id>
        <label>LEO1</label>
    </interactant>
    <organismsDiffer>false</organismsDiffer>
    <experiments>6</experiments>
</comment>
<comment type="interaction">
    <interactant intactId="EBI-12855">
        <id>P38351</id>
    </interactant>
    <interactant intactId="EBI-15773">
        <id>P16370</id>
        <label>RPB3</label>
    </interactant>
    <organismsDiffer>false</organismsDiffer>
    <experiments>2</experiments>
</comment>
<comment type="interaction">
    <interactant intactId="EBI-12855">
        <id>P38351</id>
    </interactant>
    <interactant intactId="EBI-16303">
        <id>P53064</id>
        <label>RTF1</label>
    </interactant>
    <organismsDiffer>false</organismsDiffer>
    <experiments>9</experiments>
</comment>
<comment type="interaction">
    <interactant intactId="EBI-12855">
        <id>P38351</id>
    </interactant>
    <interactant intactId="EBI-17372">
        <id>Q00772</id>
        <label>SLT2</label>
    </interactant>
    <organismsDiffer>false</organismsDiffer>
    <experiments>2</experiments>
</comment>
<comment type="subcellular location">
    <subcellularLocation>
        <location evidence="6">Nucleus</location>
        <location evidence="6">Nucleoplasm</location>
    </subcellularLocation>
</comment>
<comment type="miscellaneous">
    <text evidence="5">Present with 1040 molecules/cell in log phase SD medium.</text>
</comment>
<comment type="similarity">
    <text evidence="8">Belongs to the PAF1 family.</text>
</comment>
<evidence type="ECO:0000256" key="1">
    <source>
        <dbReference type="SAM" id="MobiDB-lite"/>
    </source>
</evidence>
<evidence type="ECO:0000269" key="2">
    <source>
    </source>
</evidence>
<evidence type="ECO:0000269" key="3">
    <source>
    </source>
</evidence>
<evidence type="ECO:0000269" key="4">
    <source>
    </source>
</evidence>
<evidence type="ECO:0000269" key="5">
    <source>
    </source>
</evidence>
<evidence type="ECO:0000269" key="6">
    <source>
    </source>
</evidence>
<evidence type="ECO:0000269" key="7">
    <source>
    </source>
</evidence>
<evidence type="ECO:0000305" key="8"/>
<evidence type="ECO:0007744" key="9">
    <source>
    </source>
</evidence>
<evidence type="ECO:0007744" key="10">
    <source>
    </source>
</evidence>
<evidence type="ECO:0007744" key="11">
    <source>
    </source>
</evidence>
<evidence type="ECO:0007829" key="12">
    <source>
        <dbReference type="PDB" id="5ZYP"/>
    </source>
</evidence>
<evidence type="ECO:0007829" key="13">
    <source>
        <dbReference type="PDB" id="7DKH"/>
    </source>
</evidence>
<reference key="1">
    <citation type="journal article" date="1994" name="Yeast">
        <title>The sequence of a 32,420 bp segment located on the right arm of chromosome II from Saccharomyces cerevisiae.</title>
        <authorList>
            <person name="Holmstroem K."/>
            <person name="Brandt T."/>
            <person name="Kallesoe T."/>
        </authorList>
    </citation>
    <scope>NUCLEOTIDE SEQUENCE [GENOMIC DNA]</scope>
    <source>
        <strain>ATCC 204508 / S288c</strain>
    </source>
</reference>
<reference key="2">
    <citation type="journal article" date="1994" name="EMBO J.">
        <title>Complete DNA sequence of yeast chromosome II.</title>
        <authorList>
            <person name="Feldmann H."/>
            <person name="Aigle M."/>
            <person name="Aljinovic G."/>
            <person name="Andre B."/>
            <person name="Baclet M.C."/>
            <person name="Barthe C."/>
            <person name="Baur A."/>
            <person name="Becam A.-M."/>
            <person name="Biteau N."/>
            <person name="Boles E."/>
            <person name="Brandt T."/>
            <person name="Brendel M."/>
            <person name="Brueckner M."/>
            <person name="Bussereau F."/>
            <person name="Christiansen C."/>
            <person name="Contreras R."/>
            <person name="Crouzet M."/>
            <person name="Cziepluch C."/>
            <person name="Demolis N."/>
            <person name="Delaveau T."/>
            <person name="Doignon F."/>
            <person name="Domdey H."/>
            <person name="Duesterhus S."/>
            <person name="Dubois E."/>
            <person name="Dujon B."/>
            <person name="El Bakkoury M."/>
            <person name="Entian K.-D."/>
            <person name="Feuermann M."/>
            <person name="Fiers W."/>
            <person name="Fobo G.M."/>
            <person name="Fritz C."/>
            <person name="Gassenhuber J."/>
            <person name="Glansdorff N."/>
            <person name="Goffeau A."/>
            <person name="Grivell L.A."/>
            <person name="de Haan M."/>
            <person name="Hein C."/>
            <person name="Herbert C.J."/>
            <person name="Hollenberg C.P."/>
            <person name="Holmstroem K."/>
            <person name="Jacq C."/>
            <person name="Jacquet M."/>
            <person name="Jauniaux J.-C."/>
            <person name="Jonniaux J.-L."/>
            <person name="Kallesoee T."/>
            <person name="Kiesau P."/>
            <person name="Kirchrath L."/>
            <person name="Koetter P."/>
            <person name="Korol S."/>
            <person name="Liebl S."/>
            <person name="Logghe M."/>
            <person name="Lohan A.J.E."/>
            <person name="Louis E.J."/>
            <person name="Li Z.Y."/>
            <person name="Maat M.J."/>
            <person name="Mallet L."/>
            <person name="Mannhaupt G."/>
            <person name="Messenguy F."/>
            <person name="Miosga T."/>
            <person name="Molemans F."/>
            <person name="Mueller S."/>
            <person name="Nasr F."/>
            <person name="Obermaier B."/>
            <person name="Perea J."/>
            <person name="Pierard A."/>
            <person name="Piravandi E."/>
            <person name="Pohl F.M."/>
            <person name="Pohl T.M."/>
            <person name="Potier S."/>
            <person name="Proft M."/>
            <person name="Purnelle B."/>
            <person name="Ramezani Rad M."/>
            <person name="Rieger M."/>
            <person name="Rose M."/>
            <person name="Schaaff-Gerstenschlaeger I."/>
            <person name="Scherens B."/>
            <person name="Schwarzlose C."/>
            <person name="Skala J."/>
            <person name="Slonimski P.P."/>
            <person name="Smits P.H.M."/>
            <person name="Souciet J.-L."/>
            <person name="Steensma H.Y."/>
            <person name="Stucka R."/>
            <person name="Urrestarazu L.A."/>
            <person name="van der Aart Q.J.M."/>
            <person name="Van Dyck L."/>
            <person name="Vassarotti A."/>
            <person name="Vetter I."/>
            <person name="Vierendeels F."/>
            <person name="Vissers S."/>
            <person name="Wagner G."/>
            <person name="de Wergifosse P."/>
            <person name="Wolfe K.H."/>
            <person name="Zagulski M."/>
            <person name="Zimmermann F.K."/>
            <person name="Mewes H.-W."/>
            <person name="Kleine K."/>
        </authorList>
    </citation>
    <scope>NUCLEOTIDE SEQUENCE [LARGE SCALE GENOMIC DNA]</scope>
    <source>
        <strain>ATCC 204508 / S288c</strain>
    </source>
</reference>
<reference key="3">
    <citation type="journal article" date="2014" name="G3 (Bethesda)">
        <title>The reference genome sequence of Saccharomyces cerevisiae: Then and now.</title>
        <authorList>
            <person name="Engel S.R."/>
            <person name="Dietrich F.S."/>
            <person name="Fisk D.G."/>
            <person name="Binkley G."/>
            <person name="Balakrishnan R."/>
            <person name="Costanzo M.C."/>
            <person name="Dwight S.S."/>
            <person name="Hitz B.C."/>
            <person name="Karra K."/>
            <person name="Nash R.S."/>
            <person name="Weng S."/>
            <person name="Wong E.D."/>
            <person name="Lloyd P."/>
            <person name="Skrzypek M.S."/>
            <person name="Miyasato S.R."/>
            <person name="Simison M."/>
            <person name="Cherry J.M."/>
        </authorList>
    </citation>
    <scope>GENOME REANNOTATION</scope>
    <source>
        <strain>ATCC 204508 / S288c</strain>
    </source>
</reference>
<reference key="4">
    <citation type="journal article" date="1996" name="Protein Expr. Purif.">
        <title>A novel collection of accessory factors associated with yeast RNA polymerase II.</title>
        <authorList>
            <person name="Wade P.A."/>
            <person name="Werel W."/>
            <person name="Fentzke R.C."/>
            <person name="Thompson N.E."/>
            <person name="Leykam J.F."/>
            <person name="Burgess R.R."/>
            <person name="Jaehning J.A."/>
            <person name="Burton Z.F."/>
        </authorList>
    </citation>
    <scope>PROTEIN SEQUENCE OF 5-11 AND 419-426</scope>
</reference>
<reference key="5">
    <citation type="journal article" date="1996" name="Mol. Cell. Biol.">
        <title>Paf1p, an RNA polymerase II-associated factor in Saccharomyces cerevisiae, may have both positive and negative roles in transcription.</title>
        <authorList>
            <person name="Shi X."/>
            <person name="Finkelstein A."/>
            <person name="Wolf A.J."/>
            <person name="Wade P.A."/>
            <person name="Burton Z.F."/>
            <person name="Jaehning J.A."/>
        </authorList>
    </citation>
    <scope>IDENTIFICATION</scope>
    <scope>CHARACTERIZATION</scope>
</reference>
<reference key="6">
    <citation type="journal article" date="1999" name="Nucleic Acids Res.">
        <title>A role for Ctr9p and Paf1p in the regulation of G1 cyclin expression in yeast.</title>
        <authorList>
            <person name="Koch C."/>
            <person name="Wollmann P."/>
            <person name="Dahl M."/>
            <person name="Lottspeich F."/>
        </authorList>
    </citation>
    <scope>FUNCTION</scope>
    <scope>SUBUNIT</scope>
</reference>
<reference key="7">
    <citation type="journal article" date="2002" name="Mol. Cell. Biol.">
        <title>Ctr9, Rtf1, and Leo1 are components of the Paf1/RNA polymerase II complex.</title>
        <authorList>
            <person name="Mueller C.L."/>
            <person name="Jaehning J.A."/>
        </authorList>
    </citation>
    <scope>IDENTIFICATION IN THE PAF1 COMPLEX</scope>
</reference>
<reference key="8">
    <citation type="journal article" date="2002" name="Mol. Cell. Biol.">
        <title>RNA polymerase II elongation factors of Saccharomyces cerevisiae: a targeted proteomics approach.</title>
        <authorList>
            <person name="Krogan N.J."/>
            <person name="Kim M."/>
            <person name="Ahn S.H."/>
            <person name="Zhong G."/>
            <person name="Kobor M.S."/>
            <person name="Cagney G."/>
            <person name="Emili A."/>
            <person name="Shilatifard A."/>
            <person name="Buratowski S."/>
            <person name="Greenblatt J.F."/>
        </authorList>
    </citation>
    <scope>INTERACTION WITH POB3 AND SPT16</scope>
</reference>
<reference key="9">
    <citation type="journal article" date="2003" name="Nature">
        <title>Global analysis of protein expression in yeast.</title>
        <authorList>
            <person name="Ghaemmaghami S."/>
            <person name="Huh W.-K."/>
            <person name="Bower K."/>
            <person name="Howson R.W."/>
            <person name="Belle A."/>
            <person name="Dephoure N."/>
            <person name="O'Shea E.K."/>
            <person name="Weissman J.S."/>
        </authorList>
    </citation>
    <scope>LEVEL OF PROTEIN EXPRESSION [LARGE SCALE ANALYSIS]</scope>
</reference>
<reference key="10">
    <citation type="journal article" date="2005" name="Eukaryot. Cell">
        <title>Separation of the Saccharomyces cerevisiae Paf1 complex from RNA polymerase II results in changes in its subnuclear localization.</title>
        <authorList>
            <person name="Porter S.E."/>
            <person name="Penheiter K.L."/>
            <person name="Jaehning J.A."/>
        </authorList>
    </citation>
    <scope>FUNCTION</scope>
    <scope>SUBCELLULAR LOCATION</scope>
</reference>
<reference key="11">
    <citation type="journal article" date="2005" name="Mol. Cell">
        <title>A requirement for the Saccharomyces cerevisiae Paf1 complex in snoRNA 3' end formation.</title>
        <authorList>
            <person name="Sheldon K.E."/>
            <person name="Mauger D.M."/>
            <person name="Arndt K.M."/>
        </authorList>
    </citation>
    <scope>FUNCTION</scope>
</reference>
<reference key="12">
    <citation type="journal article" date="2007" name="J. Proteome Res.">
        <title>Large-scale phosphorylation analysis of alpha-factor-arrested Saccharomyces cerevisiae.</title>
        <authorList>
            <person name="Li X."/>
            <person name="Gerber S.A."/>
            <person name="Rudner A.D."/>
            <person name="Beausoleil S.A."/>
            <person name="Haas W."/>
            <person name="Villen J."/>
            <person name="Elias J.E."/>
            <person name="Gygi S.P."/>
        </authorList>
    </citation>
    <scope>PHOSPHORYLATION [LARGE SCALE ANALYSIS] AT SER-147</scope>
    <scope>IDENTIFICATION BY MASS SPECTROMETRY [LARGE SCALE ANALYSIS]</scope>
    <source>
        <strain>ADR376</strain>
    </source>
</reference>
<reference key="13">
    <citation type="journal article" date="2008" name="Mol. Cell. Proteomics">
        <title>A multidimensional chromatography technology for in-depth phosphoproteome analysis.</title>
        <authorList>
            <person name="Albuquerque C.P."/>
            <person name="Smolka M.B."/>
            <person name="Payne S.H."/>
            <person name="Bafna V."/>
            <person name="Eng J."/>
            <person name="Zhou H."/>
        </authorList>
    </citation>
    <scope>PHOSPHORYLATION [LARGE SCALE ANALYSIS] AT SER-147</scope>
    <scope>IDENTIFICATION BY MASS SPECTROMETRY [LARGE SCALE ANALYSIS]</scope>
</reference>
<reference key="14">
    <citation type="journal article" date="2009" name="Science">
        <title>Global analysis of Cdk1 substrate phosphorylation sites provides insights into evolution.</title>
        <authorList>
            <person name="Holt L.J."/>
            <person name="Tuch B.B."/>
            <person name="Villen J."/>
            <person name="Johnson A.D."/>
            <person name="Gygi S.P."/>
            <person name="Morgan D.O."/>
        </authorList>
    </citation>
    <scope>PHOSPHORYLATION [LARGE SCALE ANALYSIS] AT SER-147 AND THR-422</scope>
    <scope>IDENTIFICATION BY MASS SPECTROMETRY [LARGE SCALE ANALYSIS]</scope>
</reference>
<sequence>MSKKQEYIAPIKYQNSLPVPQLPPKLLVYPESPETNADSSQLINSLYIKTNVTNLIQQDEDLGMPVDLMKFPGLLNKLDSKLLYGFDNVKLDKDDRILLRDPRIDRLTKTDISKVTFLRRTEYVSNTIAAHDNTSLKRKRRLDDGDSDDENLDVNHIISRVEGTFNKTDKWQHPVKKGVKMVKKWDLLPDTASMDQVYFILKFMGSASLDTKEKKSLNTGIFRPVELEEDEWISMYATDHKDSAILENELEKGMDEMDDDSHEGKIYKFKRIRDYDMKQVAEKPMTELAIRLNDKDGIAYYKPLRSKIELRRRRVNDIIKPLVKEHDIDQLNVTLRNPSTKEANIRDKLRMKFDPINFATVDEEDDEDEEQPEDVKKESEGDSKTEGSEQEGENEKDEEIKQEKENEQDEENKQDENRAADTPETSDAVHTEQKPEEEKETLQEE</sequence>
<name>PAF1_YEAST</name>
<organism>
    <name type="scientific">Saccharomyces cerevisiae (strain ATCC 204508 / S288c)</name>
    <name type="common">Baker's yeast</name>
    <dbReference type="NCBI Taxonomy" id="559292"/>
    <lineage>
        <taxon>Eukaryota</taxon>
        <taxon>Fungi</taxon>
        <taxon>Dikarya</taxon>
        <taxon>Ascomycota</taxon>
        <taxon>Saccharomycotina</taxon>
        <taxon>Saccharomycetes</taxon>
        <taxon>Saccharomycetales</taxon>
        <taxon>Saccharomycetaceae</taxon>
        <taxon>Saccharomyces</taxon>
    </lineage>
</organism>
<gene>
    <name type="primary">PAF1</name>
    <name type="ordered locus">YBR279W</name>
    <name type="ORF">YBR2016</name>
</gene>
<dbReference type="EMBL" id="X76053">
    <property type="protein sequence ID" value="CAA53642.1"/>
    <property type="molecule type" value="Genomic_DNA"/>
</dbReference>
<dbReference type="EMBL" id="Z36148">
    <property type="protein sequence ID" value="CAA85243.1"/>
    <property type="molecule type" value="Genomic_DNA"/>
</dbReference>
<dbReference type="EMBL" id="BK006936">
    <property type="protein sequence ID" value="DAA07394.1"/>
    <property type="molecule type" value="Genomic_DNA"/>
</dbReference>
<dbReference type="PIR" id="S44541">
    <property type="entry name" value="S44541"/>
</dbReference>
<dbReference type="RefSeq" id="NP_009838.1">
    <property type="nucleotide sequence ID" value="NM_001178627.1"/>
</dbReference>
<dbReference type="PDB" id="5ZYP">
    <property type="method" value="X-ray"/>
    <property type="resolution" value="2.53 A"/>
    <property type="chains" value="A=34-103"/>
</dbReference>
<dbReference type="PDB" id="7DKH">
    <property type="method" value="X-ray"/>
    <property type="resolution" value="2.90 A"/>
    <property type="chains" value="B/F/J=1-103"/>
</dbReference>
<dbReference type="PDBsum" id="5ZYP"/>
<dbReference type="PDBsum" id="7DKH"/>
<dbReference type="SMR" id="P38351"/>
<dbReference type="BioGRID" id="32973">
    <property type="interactions" value="200"/>
</dbReference>
<dbReference type="ComplexPortal" id="CPX-1726">
    <property type="entry name" value="PAF1 complex"/>
</dbReference>
<dbReference type="DIP" id="DIP-1149N"/>
<dbReference type="FunCoup" id="P38351">
    <property type="interactions" value="431"/>
</dbReference>
<dbReference type="IntAct" id="P38351">
    <property type="interactions" value="25"/>
</dbReference>
<dbReference type="MINT" id="P38351"/>
<dbReference type="STRING" id="4932.YBR279W"/>
<dbReference type="iPTMnet" id="P38351"/>
<dbReference type="PaxDb" id="4932-YBR279W"/>
<dbReference type="PeptideAtlas" id="P38351"/>
<dbReference type="EnsemblFungi" id="YBR279W_mRNA">
    <property type="protein sequence ID" value="YBR279W"/>
    <property type="gene ID" value="YBR279W"/>
</dbReference>
<dbReference type="GeneID" id="852582"/>
<dbReference type="KEGG" id="sce:YBR279W"/>
<dbReference type="AGR" id="SGD:S000000483"/>
<dbReference type="SGD" id="S000000483">
    <property type="gene designation" value="PAF1"/>
</dbReference>
<dbReference type="VEuPathDB" id="FungiDB:YBR279W"/>
<dbReference type="eggNOG" id="KOG2478">
    <property type="taxonomic scope" value="Eukaryota"/>
</dbReference>
<dbReference type="HOGENOM" id="CLU_021991_3_1_1"/>
<dbReference type="InParanoid" id="P38351"/>
<dbReference type="OMA" id="GAYYYPI"/>
<dbReference type="OrthoDB" id="10260285at2759"/>
<dbReference type="BioCyc" id="YEAST:G3O-29199-MONOMER"/>
<dbReference type="BioGRID-ORCS" id="852582">
    <property type="hits" value="3 hits in 10 CRISPR screens"/>
</dbReference>
<dbReference type="PRO" id="PR:P38351"/>
<dbReference type="Proteomes" id="UP000002311">
    <property type="component" value="Chromosome II"/>
</dbReference>
<dbReference type="RNAct" id="P38351">
    <property type="molecule type" value="protein"/>
</dbReference>
<dbReference type="GO" id="GO:0016593">
    <property type="term" value="C:Cdc73/Paf1 complex"/>
    <property type="evidence" value="ECO:0000353"/>
    <property type="project" value="SGD"/>
</dbReference>
<dbReference type="GO" id="GO:0000791">
    <property type="term" value="C:euchromatin"/>
    <property type="evidence" value="ECO:0000314"/>
    <property type="project" value="SGD"/>
</dbReference>
<dbReference type="GO" id="GO:0005634">
    <property type="term" value="C:nucleus"/>
    <property type="evidence" value="ECO:0000314"/>
    <property type="project" value="SGD"/>
</dbReference>
<dbReference type="GO" id="GO:0003682">
    <property type="term" value="F:chromatin binding"/>
    <property type="evidence" value="ECO:0000314"/>
    <property type="project" value="SGD"/>
</dbReference>
<dbReference type="GO" id="GO:1990269">
    <property type="term" value="F:RNA polymerase II C-terminal domain phosphoserine binding"/>
    <property type="evidence" value="ECO:0000314"/>
    <property type="project" value="SGD"/>
</dbReference>
<dbReference type="GO" id="GO:0000993">
    <property type="term" value="F:RNA polymerase II complex binding"/>
    <property type="evidence" value="ECO:0000353"/>
    <property type="project" value="SGD"/>
</dbReference>
<dbReference type="GO" id="GO:0006353">
    <property type="term" value="P:DNA-templated transcription termination"/>
    <property type="evidence" value="ECO:0000315"/>
    <property type="project" value="SGD"/>
</dbReference>
<dbReference type="GO" id="GO:0000082">
    <property type="term" value="P:G1/S transition of mitotic cell cycle"/>
    <property type="evidence" value="ECO:0000315"/>
    <property type="project" value="SGD"/>
</dbReference>
<dbReference type="GO" id="GO:0070911">
    <property type="term" value="P:global genome nucleotide-excision repair"/>
    <property type="evidence" value="ECO:0000315"/>
    <property type="project" value="SGD"/>
</dbReference>
<dbReference type="GO" id="GO:0031124">
    <property type="term" value="P:mRNA 3'-end processing"/>
    <property type="evidence" value="ECO:0000315"/>
    <property type="project" value="SGD"/>
</dbReference>
<dbReference type="GO" id="GO:0045910">
    <property type="term" value="P:negative regulation of DNA recombination"/>
    <property type="evidence" value="ECO:0000315"/>
    <property type="project" value="SGD"/>
</dbReference>
<dbReference type="GO" id="GO:1901525">
    <property type="term" value="P:negative regulation of mitophagy"/>
    <property type="evidence" value="ECO:0000315"/>
    <property type="project" value="SGD"/>
</dbReference>
<dbReference type="GO" id="GO:0000122">
    <property type="term" value="P:negative regulation of transcription by RNA polymerase II"/>
    <property type="evidence" value="ECO:0000315"/>
    <property type="project" value="SGD"/>
</dbReference>
<dbReference type="GO" id="GO:2001209">
    <property type="term" value="P:positive regulation of transcription elongation by RNA polymerase I"/>
    <property type="evidence" value="ECO:0000314"/>
    <property type="project" value="SGD"/>
</dbReference>
<dbReference type="GO" id="GO:0032968">
    <property type="term" value="P:positive regulation of transcription elongation by RNA polymerase II"/>
    <property type="evidence" value="ECO:0000315"/>
    <property type="project" value="SGD"/>
</dbReference>
<dbReference type="GO" id="GO:0000183">
    <property type="term" value="P:rDNA heterochromatin formation"/>
    <property type="evidence" value="ECO:0000315"/>
    <property type="project" value="SGD"/>
</dbReference>
<dbReference type="GO" id="GO:0006357">
    <property type="term" value="P:regulation of transcription by RNA polymerase II"/>
    <property type="evidence" value="ECO:0000315"/>
    <property type="project" value="SGD"/>
</dbReference>
<dbReference type="GO" id="GO:0090262">
    <property type="term" value="P:regulation of transcription-coupled nucleotide-excision repair"/>
    <property type="evidence" value="ECO:0000316"/>
    <property type="project" value="SGD"/>
</dbReference>
<dbReference type="GO" id="GO:0006364">
    <property type="term" value="P:rRNA processing"/>
    <property type="evidence" value="ECO:0000315"/>
    <property type="project" value="SGD"/>
</dbReference>
<dbReference type="GO" id="GO:0031126">
    <property type="term" value="P:sno(s)RNA 3'-end processing"/>
    <property type="evidence" value="ECO:0000315"/>
    <property type="project" value="SGD"/>
</dbReference>
<dbReference type="GO" id="GO:0009302">
    <property type="term" value="P:sno(s)RNA transcription"/>
    <property type="evidence" value="ECO:0000315"/>
    <property type="project" value="SGD"/>
</dbReference>
<dbReference type="GO" id="GO:0001015">
    <property type="term" value="P:snoRNA transcription by RNA polymerase II"/>
    <property type="evidence" value="ECO:0000314"/>
    <property type="project" value="SGD"/>
</dbReference>
<dbReference type="GO" id="GO:0006360">
    <property type="term" value="P:transcription by RNA polymerase I"/>
    <property type="evidence" value="ECO:0000315"/>
    <property type="project" value="SGD"/>
</dbReference>
<dbReference type="GO" id="GO:0006383">
    <property type="term" value="P:transcription by RNA polymerase III"/>
    <property type="evidence" value="ECO:0000315"/>
    <property type="project" value="SGD"/>
</dbReference>
<dbReference type="GO" id="GO:0006362">
    <property type="term" value="P:transcription elongation by RNA polymerase I"/>
    <property type="evidence" value="ECO:0000315"/>
    <property type="project" value="SGD"/>
</dbReference>
<dbReference type="GO" id="GO:0006368">
    <property type="term" value="P:transcription elongation by RNA polymerase II"/>
    <property type="evidence" value="ECO:0000315"/>
    <property type="project" value="SGD"/>
</dbReference>
<dbReference type="InterPro" id="IPR007133">
    <property type="entry name" value="RNA_pol_II-assoc_Paf1"/>
</dbReference>
<dbReference type="PANTHER" id="PTHR23188">
    <property type="entry name" value="RNA POLYMERASE II-ASSOCIATED FACTOR 1 HOMOLOG"/>
    <property type="match status" value="1"/>
</dbReference>
<dbReference type="PANTHER" id="PTHR23188:SF12">
    <property type="entry name" value="RNA POLYMERASE II-ASSOCIATED FACTOR 1 HOMOLOG"/>
    <property type="match status" value="1"/>
</dbReference>
<dbReference type="Pfam" id="PF03985">
    <property type="entry name" value="Paf1"/>
    <property type="match status" value="1"/>
</dbReference>
<protein>
    <recommendedName>
        <fullName>RNA polymerase II-associated protein 1</fullName>
    </recommendedName>
    <alternativeName>
        <fullName>Protein PAF1</fullName>
    </alternativeName>
</protein>
<accession>P38351</accession>
<accession>D6VQS4</accession>
<accession>Q9URC9</accession>
<feature type="chain" id="PRO_0000058174" description="RNA polymerase II-associated protein 1">
    <location>
        <begin position="1"/>
        <end position="445"/>
    </location>
</feature>
<feature type="region of interest" description="Disordered" evidence="1">
    <location>
        <begin position="358"/>
        <end position="445"/>
    </location>
</feature>
<feature type="compositionally biased region" description="Acidic residues" evidence="1">
    <location>
        <begin position="361"/>
        <end position="372"/>
    </location>
</feature>
<feature type="compositionally biased region" description="Basic and acidic residues" evidence="1">
    <location>
        <begin position="373"/>
        <end position="387"/>
    </location>
</feature>
<feature type="compositionally biased region" description="Acidic residues" evidence="1">
    <location>
        <begin position="388"/>
        <end position="397"/>
    </location>
</feature>
<feature type="compositionally biased region" description="Basic and acidic residues" evidence="1">
    <location>
        <begin position="414"/>
        <end position="445"/>
    </location>
</feature>
<feature type="modified residue" description="Phosphoserine" evidence="9 10 11">
    <location>
        <position position="147"/>
    </location>
</feature>
<feature type="modified residue" description="Phosphothreonine" evidence="11">
    <location>
        <position position="422"/>
    </location>
</feature>
<feature type="helix" evidence="13">
    <location>
        <begin position="33"/>
        <end position="35"/>
    </location>
</feature>
<feature type="helix" evidence="12">
    <location>
        <begin position="43"/>
        <end position="56"/>
    </location>
</feature>
<feature type="turn" evidence="12">
    <location>
        <begin position="60"/>
        <end position="63"/>
    </location>
</feature>
<feature type="helix" evidence="12">
    <location>
        <begin position="68"/>
        <end position="70"/>
    </location>
</feature>
<feature type="helix" evidence="12">
    <location>
        <begin position="74"/>
        <end position="77"/>
    </location>
</feature>
<feature type="helix" evidence="12">
    <location>
        <begin position="81"/>
        <end position="84"/>
    </location>
</feature>
<feature type="helix" evidence="12">
    <location>
        <begin position="93"/>
        <end position="96"/>
    </location>
</feature>
<feature type="helix" evidence="12">
    <location>
        <begin position="97"/>
        <end position="99"/>
    </location>
</feature>
<proteinExistence type="evidence at protein level"/>
<keyword id="KW-0002">3D-structure</keyword>
<keyword id="KW-0010">Activator</keyword>
<keyword id="KW-0903">Direct protein sequencing</keyword>
<keyword id="KW-0539">Nucleus</keyword>
<keyword id="KW-0597">Phosphoprotein</keyword>
<keyword id="KW-1185">Reference proteome</keyword>
<keyword id="KW-0678">Repressor</keyword>
<keyword id="KW-0804">Transcription</keyword>
<keyword id="KW-0805">Transcription regulation</keyword>